<evidence type="ECO:0000255" key="1">
    <source>
        <dbReference type="HAMAP-Rule" id="MF_01220"/>
    </source>
</evidence>
<sequence>MISDINALKYKKVLLKVSGEALMGDKQFGHEYEVIKKIAGDIKEVIDLGVEVAIVVGGGNIYRGINAALVGMDRASADYIGMLATVINALTLQNVMESLNIYTRVLSAIPMMSVCEPYIRRKAKRHMEKKRVVIFAGGTGNPFCTTDSAAVLRAIEMNCDILLKATQVDGVYDSDPKKNPDAKKYFTISYKDVITNNLQVMDTAAIAVARENKLPIRVFSIKEQGNFARVIQDKGEYTTIEE</sequence>
<proteinExistence type="inferred from homology"/>
<dbReference type="EC" id="2.7.4.22" evidence="1"/>
<dbReference type="EMBL" id="CP000053">
    <property type="protein sequence ID" value="AAY61977.1"/>
    <property type="molecule type" value="Genomic_DNA"/>
</dbReference>
<dbReference type="SMR" id="Q4UKF4"/>
<dbReference type="STRING" id="315456.RF_1126"/>
<dbReference type="KEGG" id="rfe:RF_1126"/>
<dbReference type="eggNOG" id="COG0528">
    <property type="taxonomic scope" value="Bacteria"/>
</dbReference>
<dbReference type="HOGENOM" id="CLU_033861_0_0_5"/>
<dbReference type="OrthoDB" id="9807458at2"/>
<dbReference type="UniPathway" id="UPA00159">
    <property type="reaction ID" value="UER00275"/>
</dbReference>
<dbReference type="Proteomes" id="UP000008548">
    <property type="component" value="Chromosome"/>
</dbReference>
<dbReference type="GO" id="GO:0005829">
    <property type="term" value="C:cytosol"/>
    <property type="evidence" value="ECO:0007669"/>
    <property type="project" value="TreeGrafter"/>
</dbReference>
<dbReference type="GO" id="GO:0005524">
    <property type="term" value="F:ATP binding"/>
    <property type="evidence" value="ECO:0007669"/>
    <property type="project" value="UniProtKB-KW"/>
</dbReference>
<dbReference type="GO" id="GO:0033862">
    <property type="term" value="F:UMP kinase activity"/>
    <property type="evidence" value="ECO:0007669"/>
    <property type="project" value="UniProtKB-EC"/>
</dbReference>
<dbReference type="GO" id="GO:0044210">
    <property type="term" value="P:'de novo' CTP biosynthetic process"/>
    <property type="evidence" value="ECO:0007669"/>
    <property type="project" value="UniProtKB-UniRule"/>
</dbReference>
<dbReference type="GO" id="GO:0006225">
    <property type="term" value="P:UDP biosynthetic process"/>
    <property type="evidence" value="ECO:0007669"/>
    <property type="project" value="TreeGrafter"/>
</dbReference>
<dbReference type="CDD" id="cd04254">
    <property type="entry name" value="AAK_UMPK-PyrH-Ec"/>
    <property type="match status" value="1"/>
</dbReference>
<dbReference type="FunFam" id="3.40.1160.10:FF:000001">
    <property type="entry name" value="Uridylate kinase"/>
    <property type="match status" value="1"/>
</dbReference>
<dbReference type="Gene3D" id="3.40.1160.10">
    <property type="entry name" value="Acetylglutamate kinase-like"/>
    <property type="match status" value="1"/>
</dbReference>
<dbReference type="HAMAP" id="MF_01220_B">
    <property type="entry name" value="PyrH_B"/>
    <property type="match status" value="1"/>
</dbReference>
<dbReference type="InterPro" id="IPR036393">
    <property type="entry name" value="AceGlu_kinase-like_sf"/>
</dbReference>
<dbReference type="InterPro" id="IPR001048">
    <property type="entry name" value="Asp/Glu/Uridylate_kinase"/>
</dbReference>
<dbReference type="InterPro" id="IPR011817">
    <property type="entry name" value="Uridylate_kinase"/>
</dbReference>
<dbReference type="InterPro" id="IPR015963">
    <property type="entry name" value="Uridylate_kinase_bac"/>
</dbReference>
<dbReference type="NCBIfam" id="TIGR02075">
    <property type="entry name" value="pyrH_bact"/>
    <property type="match status" value="1"/>
</dbReference>
<dbReference type="PANTHER" id="PTHR42833">
    <property type="entry name" value="URIDYLATE KINASE"/>
    <property type="match status" value="1"/>
</dbReference>
<dbReference type="PANTHER" id="PTHR42833:SF4">
    <property type="entry name" value="URIDYLATE KINASE PUMPKIN, CHLOROPLASTIC"/>
    <property type="match status" value="1"/>
</dbReference>
<dbReference type="Pfam" id="PF00696">
    <property type="entry name" value="AA_kinase"/>
    <property type="match status" value="1"/>
</dbReference>
<dbReference type="PIRSF" id="PIRSF005650">
    <property type="entry name" value="Uridylate_kin"/>
    <property type="match status" value="1"/>
</dbReference>
<dbReference type="SUPFAM" id="SSF53633">
    <property type="entry name" value="Carbamate kinase-like"/>
    <property type="match status" value="1"/>
</dbReference>
<reference key="1">
    <citation type="journal article" date="2005" name="PLoS Biol.">
        <title>The genome sequence of Rickettsia felis identifies the first putative conjugative plasmid in an obligate intracellular parasite.</title>
        <authorList>
            <person name="Ogata H."/>
            <person name="Renesto P."/>
            <person name="Audic S."/>
            <person name="Robert C."/>
            <person name="Blanc G."/>
            <person name="Fournier P.-E."/>
            <person name="Parinello H."/>
            <person name="Claverie J.-M."/>
            <person name="Raoult D."/>
        </authorList>
    </citation>
    <scope>NUCLEOTIDE SEQUENCE [LARGE SCALE GENOMIC DNA]</scope>
    <source>
        <strain>ATCC VR-1525 / URRWXCal2</strain>
    </source>
</reference>
<accession>Q4UKF4</accession>
<feature type="chain" id="PRO_0000272399" description="Uridylate kinase">
    <location>
        <begin position="1"/>
        <end position="242"/>
    </location>
</feature>
<feature type="binding site" evidence="1">
    <location>
        <begin position="16"/>
        <end position="19"/>
    </location>
    <ligand>
        <name>ATP</name>
        <dbReference type="ChEBI" id="CHEBI:30616"/>
    </ligand>
</feature>
<feature type="binding site" evidence="1">
    <location>
        <position position="58"/>
    </location>
    <ligand>
        <name>UMP</name>
        <dbReference type="ChEBI" id="CHEBI:57865"/>
    </ligand>
</feature>
<feature type="binding site" evidence="1">
    <location>
        <position position="59"/>
    </location>
    <ligand>
        <name>ATP</name>
        <dbReference type="ChEBI" id="CHEBI:30616"/>
    </ligand>
</feature>
<feature type="binding site" evidence="1">
    <location>
        <position position="63"/>
    </location>
    <ligand>
        <name>ATP</name>
        <dbReference type="ChEBI" id="CHEBI:30616"/>
    </ligand>
</feature>
<feature type="binding site" evidence="1">
    <location>
        <position position="78"/>
    </location>
    <ligand>
        <name>UMP</name>
        <dbReference type="ChEBI" id="CHEBI:57865"/>
    </ligand>
</feature>
<feature type="binding site" evidence="1">
    <location>
        <begin position="139"/>
        <end position="146"/>
    </location>
    <ligand>
        <name>UMP</name>
        <dbReference type="ChEBI" id="CHEBI:57865"/>
    </ligand>
</feature>
<feature type="binding site" evidence="1">
    <location>
        <position position="166"/>
    </location>
    <ligand>
        <name>ATP</name>
        <dbReference type="ChEBI" id="CHEBI:30616"/>
    </ligand>
</feature>
<feature type="binding site" evidence="1">
    <location>
        <position position="167"/>
    </location>
    <ligand>
        <name>ATP</name>
        <dbReference type="ChEBI" id="CHEBI:30616"/>
    </ligand>
</feature>
<feature type="binding site" evidence="1">
    <location>
        <position position="172"/>
    </location>
    <ligand>
        <name>ATP</name>
        <dbReference type="ChEBI" id="CHEBI:30616"/>
    </ligand>
</feature>
<feature type="binding site" evidence="1">
    <location>
        <position position="175"/>
    </location>
    <ligand>
        <name>ATP</name>
        <dbReference type="ChEBI" id="CHEBI:30616"/>
    </ligand>
</feature>
<keyword id="KW-0067">ATP-binding</keyword>
<keyword id="KW-0963">Cytoplasm</keyword>
<keyword id="KW-0418">Kinase</keyword>
<keyword id="KW-0547">Nucleotide-binding</keyword>
<keyword id="KW-0665">Pyrimidine biosynthesis</keyword>
<keyword id="KW-0808">Transferase</keyword>
<name>PYRH_RICFE</name>
<gene>
    <name evidence="1" type="primary">pyrH</name>
    <name type="ordered locus">RF_1126</name>
</gene>
<protein>
    <recommendedName>
        <fullName evidence="1">Uridylate kinase</fullName>
        <shortName evidence="1">UK</shortName>
        <ecNumber evidence="1">2.7.4.22</ecNumber>
    </recommendedName>
    <alternativeName>
        <fullName evidence="1">Uridine monophosphate kinase</fullName>
        <shortName evidence="1">UMP kinase</shortName>
        <shortName evidence="1">UMPK</shortName>
    </alternativeName>
</protein>
<comment type="function">
    <text evidence="1">Catalyzes the reversible phosphorylation of UMP to UDP.</text>
</comment>
<comment type="catalytic activity">
    <reaction evidence="1">
        <text>UMP + ATP = UDP + ADP</text>
        <dbReference type="Rhea" id="RHEA:24400"/>
        <dbReference type="ChEBI" id="CHEBI:30616"/>
        <dbReference type="ChEBI" id="CHEBI:57865"/>
        <dbReference type="ChEBI" id="CHEBI:58223"/>
        <dbReference type="ChEBI" id="CHEBI:456216"/>
        <dbReference type="EC" id="2.7.4.22"/>
    </reaction>
</comment>
<comment type="activity regulation">
    <text evidence="1">Inhibited by UTP.</text>
</comment>
<comment type="pathway">
    <text evidence="1">Pyrimidine metabolism; CTP biosynthesis via de novo pathway; UDP from UMP (UMPK route): step 1/1.</text>
</comment>
<comment type="subunit">
    <text evidence="1">Homohexamer.</text>
</comment>
<comment type="subcellular location">
    <subcellularLocation>
        <location evidence="1">Cytoplasm</location>
    </subcellularLocation>
</comment>
<comment type="similarity">
    <text evidence="1">Belongs to the UMP kinase family.</text>
</comment>
<organism>
    <name type="scientific">Rickettsia felis (strain ATCC VR-1525 / URRWXCal2)</name>
    <name type="common">Rickettsia azadi</name>
    <dbReference type="NCBI Taxonomy" id="315456"/>
    <lineage>
        <taxon>Bacteria</taxon>
        <taxon>Pseudomonadati</taxon>
        <taxon>Pseudomonadota</taxon>
        <taxon>Alphaproteobacteria</taxon>
        <taxon>Rickettsiales</taxon>
        <taxon>Rickettsiaceae</taxon>
        <taxon>Rickettsieae</taxon>
        <taxon>Rickettsia</taxon>
        <taxon>spotted fever group</taxon>
    </lineage>
</organism>